<organism>
    <name type="scientific">Neisseria gonorrhoeae</name>
    <dbReference type="NCBI Taxonomy" id="485"/>
    <lineage>
        <taxon>Bacteria</taxon>
        <taxon>Pseudomonadati</taxon>
        <taxon>Pseudomonadota</taxon>
        <taxon>Betaproteobacteria</taxon>
        <taxon>Neisseriales</taxon>
        <taxon>Neisseriaceae</taxon>
        <taxon>Neisseria</taxon>
    </lineage>
</organism>
<dbReference type="EMBL" id="Z18936">
    <property type="protein sequence ID" value="CAA79369.1"/>
    <property type="molecule type" value="Genomic_DNA"/>
</dbReference>
<dbReference type="PIR" id="S36344">
    <property type="entry name" value="S36344"/>
</dbReference>
<dbReference type="SMR" id="Q04881"/>
<dbReference type="Reactome" id="R-HSA-202733">
    <property type="pathway name" value="Cell surface interactions at the vascular wall"/>
</dbReference>
<dbReference type="GO" id="GO:0009279">
    <property type="term" value="C:cell outer membrane"/>
    <property type="evidence" value="ECO:0000304"/>
    <property type="project" value="Reactome"/>
</dbReference>
<dbReference type="GO" id="GO:0015288">
    <property type="term" value="F:porin activity"/>
    <property type="evidence" value="ECO:0007669"/>
    <property type="project" value="InterPro"/>
</dbReference>
<dbReference type="FunFam" id="2.40.160.20:FF:000005">
    <property type="entry name" value="Opacity protein opA54"/>
    <property type="match status" value="1"/>
</dbReference>
<dbReference type="Gene3D" id="2.40.160.20">
    <property type="match status" value="1"/>
</dbReference>
<dbReference type="InterPro" id="IPR011250">
    <property type="entry name" value="OMP/PagP_b-brl"/>
</dbReference>
<dbReference type="InterPro" id="IPR003394">
    <property type="entry name" value="Porin_opacity"/>
</dbReference>
<dbReference type="Pfam" id="PF02462">
    <property type="entry name" value="Opacity"/>
    <property type="match status" value="1"/>
</dbReference>
<dbReference type="SUPFAM" id="SSF56925">
    <property type="entry name" value="OMPA-like"/>
    <property type="match status" value="1"/>
</dbReference>
<evidence type="ECO:0000255" key="1"/>
<evidence type="ECO:0000256" key="2">
    <source>
        <dbReference type="SAM" id="MobiDB-lite"/>
    </source>
</evidence>
<evidence type="ECO:0000305" key="3"/>
<protein>
    <recommendedName>
        <fullName>Opacity protein opA68</fullName>
    </recommendedName>
    <alternativeName>
        <fullName>opA27.5</fullName>
    </alternativeName>
</protein>
<reference key="1">
    <citation type="journal article" date="1993" name="EMBO J.">
        <title>Variable opacity (Opa) outer membrane proteins account for the cell tropisms displayed by Neisseria gonorrhoeae for human leukocytes and epithelial cells.</title>
        <authorList>
            <person name="Kupsch E.-M."/>
            <person name="Knepper B."/>
            <person name="Kuroki T."/>
            <person name="Heuer I."/>
            <person name="Meyer T.F."/>
        </authorList>
    </citation>
    <scope>NUCLEOTIDE SEQUENCE [GENOMIC DNA]</scope>
    <source>
        <strain>VP1</strain>
    </source>
</reference>
<proteinExistence type="inferred from homology"/>
<comment type="function">
    <text>Implicated in a number of adherence functions. OPA proteins are implicated in pathogenesis and are subject to phase variation.</text>
</comment>
<comment type="subcellular location">
    <subcellularLocation>
        <location>Cell outer membrane</location>
    </subcellularLocation>
</comment>
<comment type="similarity">
    <text evidence="3">Belongs to the opacity porin family.</text>
</comment>
<feature type="signal peptide" evidence="1">
    <location>
        <begin position="1" status="less than"/>
        <end position="1"/>
    </location>
</feature>
<feature type="chain" id="PRO_0000021904" description="Opacity protein opA68">
    <location>
        <begin position="2"/>
        <end position="238" status="greater than"/>
    </location>
</feature>
<feature type="region of interest" description="Disordered" evidence="2">
    <location>
        <begin position="88"/>
        <end position="109"/>
    </location>
</feature>
<feature type="non-terminal residue">
    <location>
        <position position="1"/>
    </location>
</feature>
<feature type="non-terminal residue">
    <location>
        <position position="238"/>
    </location>
</feature>
<keyword id="KW-0998">Cell outer membrane</keyword>
<keyword id="KW-0472">Membrane</keyword>
<keyword id="KW-0732">Signal</keyword>
<keyword id="KW-0812">Transmembrane</keyword>
<keyword id="KW-1134">Transmembrane beta strand</keyword>
<sequence length="238" mass="26871">AGEGNGRGPYVQADLAYAYEHITHDYPKPTDPSKGKLSTVSDYFRNIRTHSIHPRVSVGYDFGGWRIAADYARYRKWNDSKYSVSIKNLQRRTSNGNRRDRKTENQENGSFHAVSSLGLSAVYDFKLNDKFKPYIGARVAYGHVRHSIDSTKKITQFLTTAGARGTVSTVHPPYKSTQDAHHQSDSIRRVGLGVIAGVGFGITPKLTLDAGYRYHNWGRLENTRFKTHEASLGVRYRF</sequence>
<name>OPA68_NEIGO</name>
<accession>Q04881</accession>